<name>PSD_MYCA9</name>
<sequence length="237" mass="25021">MARRPRPAGSEPDSGIPHIVELVRSTIPPIHPAGLPFIAGGLGLAGLGVRNRWVRGTGLALAGACAGFFRHPPRVPPNRADVVVAAADGQVCLVDRAVPPPELGLPAEPLPRISIFLSVFDVHVQRVPVAGEATAVIHRSGQFLSADRAEASVANERNSVQIRTRTGHDVIVVQIAGLIARRIVCHAKVGDQLSIGDTYGLIRFGSRVDTYLPEGSKILVQQGQRAVGAETVLAELP</sequence>
<accession>B1MH53</accession>
<reference key="1">
    <citation type="journal article" date="2009" name="PLoS ONE">
        <title>Non mycobacterial virulence genes in the genome of the emerging pathogen Mycobacterium abscessus.</title>
        <authorList>
            <person name="Ripoll F."/>
            <person name="Pasek S."/>
            <person name="Schenowitz C."/>
            <person name="Dossat C."/>
            <person name="Barbe V."/>
            <person name="Rottman M."/>
            <person name="Macheras E."/>
            <person name="Heym B."/>
            <person name="Herrmann J.L."/>
            <person name="Daffe M."/>
            <person name="Brosch R."/>
            <person name="Risler J.L."/>
            <person name="Gaillard J.L."/>
        </authorList>
    </citation>
    <scope>NUCLEOTIDE SEQUENCE [LARGE SCALE GENOMIC DNA]</scope>
    <source>
        <strain>ATCC 19977 / DSM 44196 / CCUG 20993 / CIP 104536 / JCM 13569 / NCTC 13031 / TMC 1543 / L948</strain>
    </source>
</reference>
<keyword id="KW-1003">Cell membrane</keyword>
<keyword id="KW-0210">Decarboxylase</keyword>
<keyword id="KW-0444">Lipid biosynthesis</keyword>
<keyword id="KW-0443">Lipid metabolism</keyword>
<keyword id="KW-0456">Lyase</keyword>
<keyword id="KW-0472">Membrane</keyword>
<keyword id="KW-0594">Phospholipid biosynthesis</keyword>
<keyword id="KW-1208">Phospholipid metabolism</keyword>
<keyword id="KW-0670">Pyruvate</keyword>
<keyword id="KW-1185">Reference proteome</keyword>
<keyword id="KW-0865">Zymogen</keyword>
<evidence type="ECO:0000255" key="1">
    <source>
        <dbReference type="HAMAP-Rule" id="MF_00664"/>
    </source>
</evidence>
<feature type="chain" id="PRO_1000131470" description="Phosphatidylserine decarboxylase beta chain" evidence="1">
    <location>
        <begin position="1"/>
        <end position="205"/>
    </location>
</feature>
<feature type="chain" id="PRO_1000131471" description="Phosphatidylserine decarboxylase alpha chain" evidence="1">
    <location>
        <begin position="206"/>
        <end position="237"/>
    </location>
</feature>
<feature type="active site" description="Schiff-base intermediate with substrate; via pyruvic acid" evidence="1">
    <location>
        <position position="206"/>
    </location>
</feature>
<feature type="site" description="Cleavage (non-hydrolytic); by autocatalysis" evidence="1">
    <location>
        <begin position="205"/>
        <end position="206"/>
    </location>
</feature>
<feature type="modified residue" description="Pyruvic acid (Ser); by autocatalysis" evidence="1">
    <location>
        <position position="206"/>
    </location>
</feature>
<organism>
    <name type="scientific">Mycobacteroides abscessus (strain ATCC 19977 / DSM 44196 / CCUG 20993 / CIP 104536 / JCM 13569 / NCTC 13031 / TMC 1543 / L948)</name>
    <name type="common">Mycobacterium abscessus</name>
    <dbReference type="NCBI Taxonomy" id="561007"/>
    <lineage>
        <taxon>Bacteria</taxon>
        <taxon>Bacillati</taxon>
        <taxon>Actinomycetota</taxon>
        <taxon>Actinomycetes</taxon>
        <taxon>Mycobacteriales</taxon>
        <taxon>Mycobacteriaceae</taxon>
        <taxon>Mycobacteroides</taxon>
        <taxon>Mycobacteroides abscessus</taxon>
    </lineage>
</organism>
<comment type="function">
    <text evidence="1">Catalyzes the formation of phosphatidylethanolamine (PtdEtn) from phosphatidylserine (PtdSer).</text>
</comment>
<comment type="catalytic activity">
    <reaction evidence="1">
        <text>a 1,2-diacyl-sn-glycero-3-phospho-L-serine + H(+) = a 1,2-diacyl-sn-glycero-3-phosphoethanolamine + CO2</text>
        <dbReference type="Rhea" id="RHEA:20828"/>
        <dbReference type="ChEBI" id="CHEBI:15378"/>
        <dbReference type="ChEBI" id="CHEBI:16526"/>
        <dbReference type="ChEBI" id="CHEBI:57262"/>
        <dbReference type="ChEBI" id="CHEBI:64612"/>
        <dbReference type="EC" id="4.1.1.65"/>
    </reaction>
</comment>
<comment type="cofactor">
    <cofactor evidence="1">
        <name>pyruvate</name>
        <dbReference type="ChEBI" id="CHEBI:15361"/>
    </cofactor>
    <text evidence="1">Binds 1 pyruvoyl group covalently per subunit.</text>
</comment>
<comment type="pathway">
    <text evidence="1">Phospholipid metabolism; phosphatidylethanolamine biosynthesis; phosphatidylethanolamine from CDP-diacylglycerol: step 2/2.</text>
</comment>
<comment type="subunit">
    <text evidence="1">Heterodimer of a large membrane-associated beta subunit and a small pyruvoyl-containing alpha subunit.</text>
</comment>
<comment type="subcellular location">
    <subcellularLocation>
        <location evidence="1">Cell membrane</location>
        <topology evidence="1">Peripheral membrane protein</topology>
    </subcellularLocation>
</comment>
<comment type="PTM">
    <text evidence="1">Is synthesized initially as an inactive proenzyme. Formation of the active enzyme involves a self-maturation process in which the active site pyruvoyl group is generated from an internal serine residue via an autocatalytic post-translational modification. Two non-identical subunits are generated from the proenzyme in this reaction, and the pyruvate is formed at the N-terminus of the alpha chain, which is derived from the carboxyl end of the proenzyme. The post-translation cleavage follows an unusual pathway, termed non-hydrolytic serinolysis, in which the side chain hydroxyl group of the serine supplies its oxygen atom to form the C-terminus of the beta chain, while the remainder of the serine residue undergoes an oxidative deamination to produce ammonia and the pyruvoyl prosthetic group on the alpha chain.</text>
</comment>
<comment type="similarity">
    <text evidence="1">Belongs to the phosphatidylserine decarboxylase family. PSD-A subfamily.</text>
</comment>
<dbReference type="EC" id="4.1.1.65" evidence="1"/>
<dbReference type="EMBL" id="CU458896">
    <property type="protein sequence ID" value="CAM60737.1"/>
    <property type="molecule type" value="Genomic_DNA"/>
</dbReference>
<dbReference type="RefSeq" id="WP_005113180.1">
    <property type="nucleotide sequence ID" value="NZ_MLCG01000008.1"/>
</dbReference>
<dbReference type="GeneID" id="93377584"/>
<dbReference type="KEGG" id="mab:MAB_0639c"/>
<dbReference type="UniPathway" id="UPA00558">
    <property type="reaction ID" value="UER00616"/>
</dbReference>
<dbReference type="Proteomes" id="UP000007137">
    <property type="component" value="Chromosome"/>
</dbReference>
<dbReference type="GO" id="GO:0005886">
    <property type="term" value="C:plasma membrane"/>
    <property type="evidence" value="ECO:0007669"/>
    <property type="project" value="UniProtKB-SubCell"/>
</dbReference>
<dbReference type="GO" id="GO:0004609">
    <property type="term" value="F:phosphatidylserine decarboxylase activity"/>
    <property type="evidence" value="ECO:0007669"/>
    <property type="project" value="UniProtKB-UniRule"/>
</dbReference>
<dbReference type="GO" id="GO:0006646">
    <property type="term" value="P:phosphatidylethanolamine biosynthetic process"/>
    <property type="evidence" value="ECO:0007669"/>
    <property type="project" value="UniProtKB-UniRule"/>
</dbReference>
<dbReference type="HAMAP" id="MF_00664">
    <property type="entry name" value="PS_decarb_PSD_A"/>
    <property type="match status" value="1"/>
</dbReference>
<dbReference type="InterPro" id="IPR003817">
    <property type="entry name" value="PS_Dcarbxylase"/>
</dbReference>
<dbReference type="InterPro" id="IPR033175">
    <property type="entry name" value="PSD-A"/>
</dbReference>
<dbReference type="NCBIfam" id="NF003679">
    <property type="entry name" value="PRK05305.1-3"/>
    <property type="match status" value="1"/>
</dbReference>
<dbReference type="PANTHER" id="PTHR35809">
    <property type="entry name" value="ARCHAETIDYLSERINE DECARBOXYLASE PROENZYME-RELATED"/>
    <property type="match status" value="1"/>
</dbReference>
<dbReference type="PANTHER" id="PTHR35809:SF1">
    <property type="entry name" value="ARCHAETIDYLSERINE DECARBOXYLASE PROENZYME-RELATED"/>
    <property type="match status" value="1"/>
</dbReference>
<dbReference type="Pfam" id="PF02666">
    <property type="entry name" value="PS_Dcarbxylase"/>
    <property type="match status" value="1"/>
</dbReference>
<gene>
    <name evidence="1" type="primary">psd</name>
    <name type="ordered locus">MAB_0639c</name>
</gene>
<proteinExistence type="inferred from homology"/>
<protein>
    <recommendedName>
        <fullName evidence="1">Phosphatidylserine decarboxylase proenzyme</fullName>
        <ecNumber evidence="1">4.1.1.65</ecNumber>
    </recommendedName>
    <component>
        <recommendedName>
            <fullName evidence="1">Phosphatidylserine decarboxylase alpha chain</fullName>
        </recommendedName>
    </component>
    <component>
        <recommendedName>
            <fullName evidence="1">Phosphatidylserine decarboxylase beta chain</fullName>
        </recommendedName>
    </component>
</protein>